<protein>
    <recommendedName>
        <fullName>Uncharacterized transporter YdeK</fullName>
    </recommendedName>
</protein>
<organism>
    <name type="scientific">Bacillus subtilis (strain 168)</name>
    <dbReference type="NCBI Taxonomy" id="224308"/>
    <lineage>
        <taxon>Bacteria</taxon>
        <taxon>Bacillati</taxon>
        <taxon>Bacillota</taxon>
        <taxon>Bacilli</taxon>
        <taxon>Bacillales</taxon>
        <taxon>Bacillaceae</taxon>
        <taxon>Bacillus</taxon>
    </lineage>
</organism>
<accession>P96668</accession>
<accession>Q797I0</accession>
<gene>
    <name type="primary">ydeK</name>
    <name type="ordered locus">BSU05230</name>
</gene>
<sequence length="287" mass="30349">MNKTTNGWINGFIGVLIFSGSLPATRLAVSDFDPLFLTVCRAAIAGVLAGGLLLIFRQQHPAKRDLISLLVVAFGVVIGFPLLTALALQHVTSAHAIVFIGLLPLATAVFGVLRGGERPRPVFWIFSAAGSLLVAGFALIQGGGSSPLGDAYMLASIVVCGLGYAEGAKLSRRLGNWQVISWALVLSLPLMLPLSFFFTPDSWSAIGVPALLSLAYVSLFSMLIGFVFWYRGLAQGGIAAVGQLQLLQPFFGLLLASVILHEKVGWALVAVNIAVIMCVAAARRFAK</sequence>
<comment type="subcellular location">
    <subcellularLocation>
        <location evidence="2">Cell membrane</location>
        <topology evidence="2">Multi-pass membrane protein</topology>
    </subcellularLocation>
</comment>
<comment type="similarity">
    <text evidence="2">Belongs to the EamA transporter family.</text>
</comment>
<keyword id="KW-1003">Cell membrane</keyword>
<keyword id="KW-0472">Membrane</keyword>
<keyword id="KW-1185">Reference proteome</keyword>
<keyword id="KW-0677">Repeat</keyword>
<keyword id="KW-0812">Transmembrane</keyword>
<keyword id="KW-1133">Transmembrane helix</keyword>
<keyword id="KW-0813">Transport</keyword>
<dbReference type="EMBL" id="AB001488">
    <property type="protein sequence ID" value="BAA19358.1"/>
    <property type="molecule type" value="Genomic_DNA"/>
</dbReference>
<dbReference type="EMBL" id="AL009126">
    <property type="protein sequence ID" value="CAB12330.1"/>
    <property type="molecule type" value="Genomic_DNA"/>
</dbReference>
<dbReference type="PIR" id="E69778">
    <property type="entry name" value="E69778"/>
</dbReference>
<dbReference type="RefSeq" id="NP_388404.1">
    <property type="nucleotide sequence ID" value="NC_000964.3"/>
</dbReference>
<dbReference type="RefSeq" id="WP_003234225.1">
    <property type="nucleotide sequence ID" value="NZ_OZ025638.1"/>
</dbReference>
<dbReference type="SMR" id="P96668"/>
<dbReference type="FunCoup" id="P96668">
    <property type="interactions" value="13"/>
</dbReference>
<dbReference type="STRING" id="224308.BSU05230"/>
<dbReference type="TCDB" id="2.A.7.3.24">
    <property type="family name" value="the drug/metabolite transporter (dmt) superfamily"/>
</dbReference>
<dbReference type="PaxDb" id="224308-BSU05230"/>
<dbReference type="EnsemblBacteria" id="CAB12330">
    <property type="protein sequence ID" value="CAB12330"/>
    <property type="gene ID" value="BSU_05230"/>
</dbReference>
<dbReference type="GeneID" id="938112"/>
<dbReference type="KEGG" id="bsu:BSU05230"/>
<dbReference type="PATRIC" id="fig|224308.179.peg.558"/>
<dbReference type="eggNOG" id="COG0697">
    <property type="taxonomic scope" value="Bacteria"/>
</dbReference>
<dbReference type="InParanoid" id="P96668"/>
<dbReference type="OrthoDB" id="9784288at2"/>
<dbReference type="PhylomeDB" id="P96668"/>
<dbReference type="BioCyc" id="BSUB:BSU05230-MONOMER"/>
<dbReference type="Proteomes" id="UP000001570">
    <property type="component" value="Chromosome"/>
</dbReference>
<dbReference type="GO" id="GO:0005886">
    <property type="term" value="C:plasma membrane"/>
    <property type="evidence" value="ECO:0007669"/>
    <property type="project" value="UniProtKB-SubCell"/>
</dbReference>
<dbReference type="InterPro" id="IPR050638">
    <property type="entry name" value="AA-Vitamin_Transporters"/>
</dbReference>
<dbReference type="InterPro" id="IPR000620">
    <property type="entry name" value="EamA_dom"/>
</dbReference>
<dbReference type="PANTHER" id="PTHR32322:SF2">
    <property type="entry name" value="EAMA DOMAIN-CONTAINING PROTEIN"/>
    <property type="match status" value="1"/>
</dbReference>
<dbReference type="PANTHER" id="PTHR32322">
    <property type="entry name" value="INNER MEMBRANE TRANSPORTER"/>
    <property type="match status" value="1"/>
</dbReference>
<dbReference type="Pfam" id="PF00892">
    <property type="entry name" value="EamA"/>
    <property type="match status" value="2"/>
</dbReference>
<dbReference type="SUPFAM" id="SSF103481">
    <property type="entry name" value="Multidrug resistance efflux transporter EmrE"/>
    <property type="match status" value="2"/>
</dbReference>
<reference key="1">
    <citation type="submission" date="1997-03" db="EMBL/GenBank/DDBJ databases">
        <title>A 148 kbp sequence of the region between 35 and 47 degree of the Bacillus subtilis genome.</title>
        <authorList>
            <person name="Kasahara Y."/>
            <person name="Nakai S."/>
            <person name="Lee S."/>
            <person name="Sadaie Y."/>
            <person name="Ogasawara N."/>
        </authorList>
    </citation>
    <scope>NUCLEOTIDE SEQUENCE [GENOMIC DNA]</scope>
    <source>
        <strain>168</strain>
    </source>
</reference>
<reference key="2">
    <citation type="journal article" date="1997" name="Nature">
        <title>The complete genome sequence of the Gram-positive bacterium Bacillus subtilis.</title>
        <authorList>
            <person name="Kunst F."/>
            <person name="Ogasawara N."/>
            <person name="Moszer I."/>
            <person name="Albertini A.M."/>
            <person name="Alloni G."/>
            <person name="Azevedo V."/>
            <person name="Bertero M.G."/>
            <person name="Bessieres P."/>
            <person name="Bolotin A."/>
            <person name="Borchert S."/>
            <person name="Borriss R."/>
            <person name="Boursier L."/>
            <person name="Brans A."/>
            <person name="Braun M."/>
            <person name="Brignell S.C."/>
            <person name="Bron S."/>
            <person name="Brouillet S."/>
            <person name="Bruschi C.V."/>
            <person name="Caldwell B."/>
            <person name="Capuano V."/>
            <person name="Carter N.M."/>
            <person name="Choi S.-K."/>
            <person name="Codani J.-J."/>
            <person name="Connerton I.F."/>
            <person name="Cummings N.J."/>
            <person name="Daniel R.A."/>
            <person name="Denizot F."/>
            <person name="Devine K.M."/>
            <person name="Duesterhoeft A."/>
            <person name="Ehrlich S.D."/>
            <person name="Emmerson P.T."/>
            <person name="Entian K.-D."/>
            <person name="Errington J."/>
            <person name="Fabret C."/>
            <person name="Ferrari E."/>
            <person name="Foulger D."/>
            <person name="Fritz C."/>
            <person name="Fujita M."/>
            <person name="Fujita Y."/>
            <person name="Fuma S."/>
            <person name="Galizzi A."/>
            <person name="Galleron N."/>
            <person name="Ghim S.-Y."/>
            <person name="Glaser P."/>
            <person name="Goffeau A."/>
            <person name="Golightly E.J."/>
            <person name="Grandi G."/>
            <person name="Guiseppi G."/>
            <person name="Guy B.J."/>
            <person name="Haga K."/>
            <person name="Haiech J."/>
            <person name="Harwood C.R."/>
            <person name="Henaut A."/>
            <person name="Hilbert H."/>
            <person name="Holsappel S."/>
            <person name="Hosono S."/>
            <person name="Hullo M.-F."/>
            <person name="Itaya M."/>
            <person name="Jones L.-M."/>
            <person name="Joris B."/>
            <person name="Karamata D."/>
            <person name="Kasahara Y."/>
            <person name="Klaerr-Blanchard M."/>
            <person name="Klein C."/>
            <person name="Kobayashi Y."/>
            <person name="Koetter P."/>
            <person name="Koningstein G."/>
            <person name="Krogh S."/>
            <person name="Kumano M."/>
            <person name="Kurita K."/>
            <person name="Lapidus A."/>
            <person name="Lardinois S."/>
            <person name="Lauber J."/>
            <person name="Lazarevic V."/>
            <person name="Lee S.-M."/>
            <person name="Levine A."/>
            <person name="Liu H."/>
            <person name="Masuda S."/>
            <person name="Mauel C."/>
            <person name="Medigue C."/>
            <person name="Medina N."/>
            <person name="Mellado R.P."/>
            <person name="Mizuno M."/>
            <person name="Moestl D."/>
            <person name="Nakai S."/>
            <person name="Noback M."/>
            <person name="Noone D."/>
            <person name="O'Reilly M."/>
            <person name="Ogawa K."/>
            <person name="Ogiwara A."/>
            <person name="Oudega B."/>
            <person name="Park S.-H."/>
            <person name="Parro V."/>
            <person name="Pohl T.M."/>
            <person name="Portetelle D."/>
            <person name="Porwollik S."/>
            <person name="Prescott A.M."/>
            <person name="Presecan E."/>
            <person name="Pujic P."/>
            <person name="Purnelle B."/>
            <person name="Rapoport G."/>
            <person name="Rey M."/>
            <person name="Reynolds S."/>
            <person name="Rieger M."/>
            <person name="Rivolta C."/>
            <person name="Rocha E."/>
            <person name="Roche B."/>
            <person name="Rose M."/>
            <person name="Sadaie Y."/>
            <person name="Sato T."/>
            <person name="Scanlan E."/>
            <person name="Schleich S."/>
            <person name="Schroeter R."/>
            <person name="Scoffone F."/>
            <person name="Sekiguchi J."/>
            <person name="Sekowska A."/>
            <person name="Seror S.J."/>
            <person name="Serror P."/>
            <person name="Shin B.-S."/>
            <person name="Soldo B."/>
            <person name="Sorokin A."/>
            <person name="Tacconi E."/>
            <person name="Takagi T."/>
            <person name="Takahashi H."/>
            <person name="Takemaru K."/>
            <person name="Takeuchi M."/>
            <person name="Tamakoshi A."/>
            <person name="Tanaka T."/>
            <person name="Terpstra P."/>
            <person name="Tognoni A."/>
            <person name="Tosato V."/>
            <person name="Uchiyama S."/>
            <person name="Vandenbol M."/>
            <person name="Vannier F."/>
            <person name="Vassarotti A."/>
            <person name="Viari A."/>
            <person name="Wambutt R."/>
            <person name="Wedler E."/>
            <person name="Wedler H."/>
            <person name="Weitzenegger T."/>
            <person name="Winters P."/>
            <person name="Wipat A."/>
            <person name="Yamamoto H."/>
            <person name="Yamane K."/>
            <person name="Yasumoto K."/>
            <person name="Yata K."/>
            <person name="Yoshida K."/>
            <person name="Yoshikawa H.-F."/>
            <person name="Zumstein E."/>
            <person name="Yoshikawa H."/>
            <person name="Danchin A."/>
        </authorList>
    </citation>
    <scope>NUCLEOTIDE SEQUENCE [LARGE SCALE GENOMIC DNA]</scope>
    <source>
        <strain>168</strain>
    </source>
</reference>
<evidence type="ECO:0000255" key="1"/>
<evidence type="ECO:0000305" key="2"/>
<proteinExistence type="inferred from homology"/>
<feature type="chain" id="PRO_0000389106" description="Uncharacterized transporter YdeK">
    <location>
        <begin position="1"/>
        <end position="287"/>
    </location>
</feature>
<feature type="transmembrane region" description="Helical" evidence="1">
    <location>
        <begin position="4"/>
        <end position="24"/>
    </location>
</feature>
<feature type="transmembrane region" description="Helical" evidence="1">
    <location>
        <begin position="36"/>
        <end position="56"/>
    </location>
</feature>
<feature type="transmembrane region" description="Helical" evidence="1">
    <location>
        <begin position="66"/>
        <end position="86"/>
    </location>
</feature>
<feature type="transmembrane region" description="Helical" evidence="1">
    <location>
        <begin position="93"/>
        <end position="113"/>
    </location>
</feature>
<feature type="transmembrane region" description="Helical" evidence="1">
    <location>
        <begin position="122"/>
        <end position="142"/>
    </location>
</feature>
<feature type="transmembrane region" description="Helical" evidence="1">
    <location>
        <begin position="148"/>
        <end position="168"/>
    </location>
</feature>
<feature type="transmembrane region" description="Helical" evidence="1">
    <location>
        <begin position="179"/>
        <end position="199"/>
    </location>
</feature>
<feature type="transmembrane region" description="Helical" evidence="1">
    <location>
        <begin position="208"/>
        <end position="228"/>
    </location>
</feature>
<feature type="transmembrane region" description="Helical" evidence="1">
    <location>
        <begin position="237"/>
        <end position="259"/>
    </location>
</feature>
<feature type="transmembrane region" description="Helical" evidence="1">
    <location>
        <begin position="264"/>
        <end position="286"/>
    </location>
</feature>
<feature type="domain" description="EamA 1">
    <location>
        <begin position="16"/>
        <end position="139"/>
    </location>
</feature>
<feature type="domain" description="EamA 2">
    <location>
        <begin position="158"/>
        <end position="284"/>
    </location>
</feature>
<name>YDEK_BACSU</name>